<dbReference type="EMBL" id="CP000561">
    <property type="protein sequence ID" value="ABO07458.1"/>
    <property type="molecule type" value="Genomic_DNA"/>
</dbReference>
<dbReference type="RefSeq" id="WP_011848715.1">
    <property type="nucleotide sequence ID" value="NC_009073.1"/>
</dbReference>
<dbReference type="PDB" id="9E6Q">
    <property type="method" value="EM"/>
    <property type="resolution" value="1.95 A"/>
    <property type="chains" value="AA=1-244"/>
</dbReference>
<dbReference type="PDB" id="9E71">
    <property type="method" value="EM"/>
    <property type="resolution" value="2.36 A"/>
    <property type="chains" value="AA=1-244"/>
</dbReference>
<dbReference type="PDB" id="9E7F">
    <property type="method" value="EM"/>
    <property type="resolution" value="2.53 A"/>
    <property type="chains" value="AA=1-244"/>
</dbReference>
<dbReference type="PDBsum" id="9E6Q"/>
<dbReference type="PDBsum" id="9E71"/>
<dbReference type="PDBsum" id="9E7F"/>
<dbReference type="EMDB" id="EMD-47578"/>
<dbReference type="EMDB" id="EMD-47628"/>
<dbReference type="EMDB" id="EMD-47668"/>
<dbReference type="SMR" id="A3MS41"/>
<dbReference type="STRING" id="410359.Pcal_0018"/>
<dbReference type="GeneID" id="4909597"/>
<dbReference type="KEGG" id="pcl:Pcal_0018"/>
<dbReference type="eggNOG" id="arCOG04067">
    <property type="taxonomic scope" value="Archaea"/>
</dbReference>
<dbReference type="HOGENOM" id="CLU_036235_0_3_2"/>
<dbReference type="OrthoDB" id="5987at2157"/>
<dbReference type="Proteomes" id="UP000001431">
    <property type="component" value="Chromosome"/>
</dbReference>
<dbReference type="GO" id="GO:0022625">
    <property type="term" value="C:cytosolic large ribosomal subunit"/>
    <property type="evidence" value="ECO:0007669"/>
    <property type="project" value="TreeGrafter"/>
</dbReference>
<dbReference type="GO" id="GO:0019843">
    <property type="term" value="F:rRNA binding"/>
    <property type="evidence" value="ECO:0007669"/>
    <property type="project" value="UniProtKB-UniRule"/>
</dbReference>
<dbReference type="GO" id="GO:0003735">
    <property type="term" value="F:structural constituent of ribosome"/>
    <property type="evidence" value="ECO:0007669"/>
    <property type="project" value="InterPro"/>
</dbReference>
<dbReference type="GO" id="GO:0002181">
    <property type="term" value="P:cytoplasmic translation"/>
    <property type="evidence" value="ECO:0007669"/>
    <property type="project" value="TreeGrafter"/>
</dbReference>
<dbReference type="FunFam" id="4.10.950.10:FF:000002">
    <property type="entry name" value="60S ribosomal protein L2"/>
    <property type="match status" value="1"/>
</dbReference>
<dbReference type="FunFam" id="2.30.30.30:FF:000006">
    <property type="entry name" value="60S ribosomal protein L8"/>
    <property type="match status" value="1"/>
</dbReference>
<dbReference type="Gene3D" id="2.30.30.30">
    <property type="match status" value="1"/>
</dbReference>
<dbReference type="Gene3D" id="2.40.50.140">
    <property type="entry name" value="Nucleic acid-binding proteins"/>
    <property type="match status" value="1"/>
</dbReference>
<dbReference type="Gene3D" id="4.10.950.10">
    <property type="entry name" value="Ribosomal protein L2, domain 3"/>
    <property type="match status" value="1"/>
</dbReference>
<dbReference type="HAMAP" id="MF_01320_A">
    <property type="entry name" value="Ribosomal_uL2_A"/>
    <property type="match status" value="1"/>
</dbReference>
<dbReference type="InterPro" id="IPR012340">
    <property type="entry name" value="NA-bd_OB-fold"/>
</dbReference>
<dbReference type="InterPro" id="IPR014722">
    <property type="entry name" value="Rib_uL2_dom2"/>
</dbReference>
<dbReference type="InterPro" id="IPR002171">
    <property type="entry name" value="Ribosomal_uL2"/>
</dbReference>
<dbReference type="InterPro" id="IPR023672">
    <property type="entry name" value="Ribosomal_uL2_arc_euk"/>
</dbReference>
<dbReference type="InterPro" id="IPR022669">
    <property type="entry name" value="Ribosomal_uL2_C"/>
</dbReference>
<dbReference type="InterPro" id="IPR014726">
    <property type="entry name" value="Ribosomal_uL2_dom3"/>
</dbReference>
<dbReference type="InterPro" id="IPR022666">
    <property type="entry name" value="Ribosomal_uL2_RNA-bd_dom"/>
</dbReference>
<dbReference type="InterPro" id="IPR008991">
    <property type="entry name" value="Translation_prot_SH3-like_sf"/>
</dbReference>
<dbReference type="NCBIfam" id="NF007180">
    <property type="entry name" value="PRK09612.1"/>
    <property type="match status" value="1"/>
</dbReference>
<dbReference type="PANTHER" id="PTHR13691:SF16">
    <property type="entry name" value="LARGE RIBOSOMAL SUBUNIT PROTEIN UL2"/>
    <property type="match status" value="1"/>
</dbReference>
<dbReference type="PANTHER" id="PTHR13691">
    <property type="entry name" value="RIBOSOMAL PROTEIN L2"/>
    <property type="match status" value="1"/>
</dbReference>
<dbReference type="Pfam" id="PF00181">
    <property type="entry name" value="Ribosomal_L2"/>
    <property type="match status" value="1"/>
</dbReference>
<dbReference type="Pfam" id="PF03947">
    <property type="entry name" value="Ribosomal_L2_C"/>
    <property type="match status" value="1"/>
</dbReference>
<dbReference type="PIRSF" id="PIRSF002158">
    <property type="entry name" value="Ribosomal_L2"/>
    <property type="match status" value="1"/>
</dbReference>
<dbReference type="SMART" id="SM01383">
    <property type="entry name" value="Ribosomal_L2"/>
    <property type="match status" value="1"/>
</dbReference>
<dbReference type="SMART" id="SM01382">
    <property type="entry name" value="Ribosomal_L2_C"/>
    <property type="match status" value="1"/>
</dbReference>
<dbReference type="SUPFAM" id="SSF50249">
    <property type="entry name" value="Nucleic acid-binding proteins"/>
    <property type="match status" value="1"/>
</dbReference>
<dbReference type="SUPFAM" id="SSF50104">
    <property type="entry name" value="Translation proteins SH3-like domain"/>
    <property type="match status" value="1"/>
</dbReference>
<comment type="function">
    <text evidence="1">One of the primary rRNA binding proteins. Required for association of the 30S and 50S subunits to form the 70S ribosome, for tRNA binding and peptide bond formation. It has been suggested to have peptidyltransferase activity; this is somewhat controversial. Makes several contacts with the 16S rRNA in the 70S ribosome.</text>
</comment>
<comment type="subunit">
    <text evidence="1">Part of the 50S ribosomal subunit. Forms a bridge to the 30S subunit in the 70S ribosome.</text>
</comment>
<comment type="similarity">
    <text evidence="1">Belongs to the universal ribosomal protein uL2 family.</text>
</comment>
<evidence type="ECO:0000255" key="1">
    <source>
        <dbReference type="HAMAP-Rule" id="MF_01320"/>
    </source>
</evidence>
<evidence type="ECO:0000256" key="2">
    <source>
        <dbReference type="SAM" id="MobiDB-lite"/>
    </source>
</evidence>
<evidence type="ECO:0000305" key="3"/>
<accession>A3MS41</accession>
<reference key="1">
    <citation type="submission" date="2007-02" db="EMBL/GenBank/DDBJ databases">
        <title>Complete sequence of Pyrobaculum calidifontis JCM 11548.</title>
        <authorList>
            <consortium name="US DOE Joint Genome Institute"/>
            <person name="Copeland A."/>
            <person name="Lucas S."/>
            <person name="Lapidus A."/>
            <person name="Barry K."/>
            <person name="Glavina del Rio T."/>
            <person name="Dalin E."/>
            <person name="Tice H."/>
            <person name="Pitluck S."/>
            <person name="Chain P."/>
            <person name="Malfatti S."/>
            <person name="Shin M."/>
            <person name="Vergez L."/>
            <person name="Schmutz J."/>
            <person name="Larimer F."/>
            <person name="Land M."/>
            <person name="Hauser L."/>
            <person name="Kyrpides N."/>
            <person name="Mikhailova N."/>
            <person name="Cozen A.E."/>
            <person name="Fitz-Gibbon S.T."/>
            <person name="House C.H."/>
            <person name="Saltikov C."/>
            <person name="Lowe T.M."/>
            <person name="Richardson P."/>
        </authorList>
    </citation>
    <scope>NUCLEOTIDE SEQUENCE [LARGE SCALE GENOMIC DNA]</scope>
    <source>
        <strain>DSM 21063 / JCM 11548 / VA1</strain>
    </source>
</reference>
<proteinExistence type="evidence at protein level"/>
<sequence>MGKRILVQRRGRGGSQFRSPSWKRDGPVRYPPNISGRGIVVEILHEPGLNAPVAKIRMENGVEFFNYAAEGLYVGQVIQVGPDAPPAVGNVLPLGKIPEGTMVFNVEKRFGDGGKFARSGGTYALVIGQRPEENKTIVRLPSGRVIEVDARGRATIGIVAGGGRVEKPFVKAGKKYHRARAKSWKYPTVRGKAMSPYAHPHGGGSHQKGGTPVPKTAPPGQKVGFIGSRCTGRGCVRARAQQKQ</sequence>
<feature type="chain" id="PRO_0000310056" description="Large ribosomal subunit protein uL2">
    <location>
        <begin position="1"/>
        <end position="244"/>
    </location>
</feature>
<feature type="region of interest" description="Disordered" evidence="2">
    <location>
        <begin position="1"/>
        <end position="26"/>
    </location>
</feature>
<feature type="region of interest" description="Disordered" evidence="2">
    <location>
        <begin position="193"/>
        <end position="225"/>
    </location>
</feature>
<feature type="compositionally biased region" description="Basic residues" evidence="2">
    <location>
        <begin position="1"/>
        <end position="12"/>
    </location>
</feature>
<protein>
    <recommendedName>
        <fullName evidence="1">Large ribosomal subunit protein uL2</fullName>
    </recommendedName>
    <alternativeName>
        <fullName evidence="3">50S ribosomal protein L2</fullName>
    </alternativeName>
</protein>
<organism>
    <name type="scientific">Pyrobaculum calidifontis (strain DSM 21063 / JCM 11548 / VA1)</name>
    <dbReference type="NCBI Taxonomy" id="410359"/>
    <lineage>
        <taxon>Archaea</taxon>
        <taxon>Thermoproteota</taxon>
        <taxon>Thermoprotei</taxon>
        <taxon>Thermoproteales</taxon>
        <taxon>Thermoproteaceae</taxon>
        <taxon>Pyrobaculum</taxon>
    </lineage>
</organism>
<name>RL2_PYRCJ</name>
<keyword id="KW-0002">3D-structure</keyword>
<keyword id="KW-0687">Ribonucleoprotein</keyword>
<keyword id="KW-0689">Ribosomal protein</keyword>
<keyword id="KW-0694">RNA-binding</keyword>
<keyword id="KW-0699">rRNA-binding</keyword>
<gene>
    <name evidence="1" type="primary">rpl2</name>
    <name type="ordered locus">Pcal_0018</name>
</gene>